<proteinExistence type="inferred from homology"/>
<organism>
    <name type="scientific">Pseudomonas syringae pv. tomato (strain ATCC BAA-871 / DC3000)</name>
    <dbReference type="NCBI Taxonomy" id="223283"/>
    <lineage>
        <taxon>Bacteria</taxon>
        <taxon>Pseudomonadati</taxon>
        <taxon>Pseudomonadota</taxon>
        <taxon>Gammaproteobacteria</taxon>
        <taxon>Pseudomonadales</taxon>
        <taxon>Pseudomonadaceae</taxon>
        <taxon>Pseudomonas</taxon>
    </lineage>
</organism>
<sequence length="181" mass="20084">MTLEQNYTAILGQLGEDVSREGLLDTPKRAAKAMQYLCRGYAQTLEEVTNGALFSSDASEMVMVKDIELYSLCEHHLLPFIGKAHVAYIPNGKVLGLSKVARIVDMYARRLQIQENLSRQIAEAIQQVTGAQGVAVVIEAKHMCMMMRGVEKQNSAMITSVMLGEFRENAATRSEFLSLIK</sequence>
<dbReference type="EC" id="3.5.4.16" evidence="1"/>
<dbReference type="EMBL" id="AE016853">
    <property type="protein sequence ID" value="AAO55553.1"/>
    <property type="molecule type" value="Genomic_DNA"/>
</dbReference>
<dbReference type="RefSeq" id="NP_791858.1">
    <property type="nucleotide sequence ID" value="NC_004578.1"/>
</dbReference>
<dbReference type="SMR" id="Q884Q3"/>
<dbReference type="STRING" id="223283.PSPTO_2035"/>
<dbReference type="KEGG" id="pst:PSPTO_2035"/>
<dbReference type="PATRIC" id="fig|223283.9.peg.2065"/>
<dbReference type="eggNOG" id="COG0302">
    <property type="taxonomic scope" value="Bacteria"/>
</dbReference>
<dbReference type="HOGENOM" id="CLU_049768_3_4_6"/>
<dbReference type="OrthoDB" id="9801207at2"/>
<dbReference type="PhylomeDB" id="Q884Q3"/>
<dbReference type="UniPathway" id="UPA00848">
    <property type="reaction ID" value="UER00151"/>
</dbReference>
<dbReference type="Proteomes" id="UP000002515">
    <property type="component" value="Chromosome"/>
</dbReference>
<dbReference type="GO" id="GO:0005737">
    <property type="term" value="C:cytoplasm"/>
    <property type="evidence" value="ECO:0007669"/>
    <property type="project" value="TreeGrafter"/>
</dbReference>
<dbReference type="GO" id="GO:0005525">
    <property type="term" value="F:GTP binding"/>
    <property type="evidence" value="ECO:0007669"/>
    <property type="project" value="UniProtKB-KW"/>
</dbReference>
<dbReference type="GO" id="GO:0003934">
    <property type="term" value="F:GTP cyclohydrolase I activity"/>
    <property type="evidence" value="ECO:0007669"/>
    <property type="project" value="UniProtKB-UniRule"/>
</dbReference>
<dbReference type="GO" id="GO:0008270">
    <property type="term" value="F:zinc ion binding"/>
    <property type="evidence" value="ECO:0007669"/>
    <property type="project" value="UniProtKB-UniRule"/>
</dbReference>
<dbReference type="GO" id="GO:0006730">
    <property type="term" value="P:one-carbon metabolic process"/>
    <property type="evidence" value="ECO:0007669"/>
    <property type="project" value="UniProtKB-UniRule"/>
</dbReference>
<dbReference type="GO" id="GO:0006729">
    <property type="term" value="P:tetrahydrobiopterin biosynthetic process"/>
    <property type="evidence" value="ECO:0007669"/>
    <property type="project" value="TreeGrafter"/>
</dbReference>
<dbReference type="GO" id="GO:0046654">
    <property type="term" value="P:tetrahydrofolate biosynthetic process"/>
    <property type="evidence" value="ECO:0007669"/>
    <property type="project" value="UniProtKB-UniRule"/>
</dbReference>
<dbReference type="FunFam" id="1.10.286.10:FF:000009">
    <property type="entry name" value="GTP cyclohydrolase 1"/>
    <property type="match status" value="1"/>
</dbReference>
<dbReference type="FunFam" id="3.30.1130.10:FF:000001">
    <property type="entry name" value="GTP cyclohydrolase 1"/>
    <property type="match status" value="1"/>
</dbReference>
<dbReference type="Gene3D" id="1.10.286.10">
    <property type="match status" value="1"/>
</dbReference>
<dbReference type="Gene3D" id="3.30.1130.10">
    <property type="match status" value="1"/>
</dbReference>
<dbReference type="HAMAP" id="MF_00223">
    <property type="entry name" value="FolE"/>
    <property type="match status" value="1"/>
</dbReference>
<dbReference type="InterPro" id="IPR043133">
    <property type="entry name" value="GTP-CH-I_C/QueF"/>
</dbReference>
<dbReference type="InterPro" id="IPR043134">
    <property type="entry name" value="GTP-CH-I_N"/>
</dbReference>
<dbReference type="InterPro" id="IPR001474">
    <property type="entry name" value="GTP_CycHdrlase_I"/>
</dbReference>
<dbReference type="InterPro" id="IPR018234">
    <property type="entry name" value="GTP_CycHdrlase_I_CS"/>
</dbReference>
<dbReference type="InterPro" id="IPR020602">
    <property type="entry name" value="GTP_CycHdrlase_I_dom"/>
</dbReference>
<dbReference type="NCBIfam" id="TIGR00063">
    <property type="entry name" value="folE"/>
    <property type="match status" value="1"/>
</dbReference>
<dbReference type="NCBIfam" id="NF006825">
    <property type="entry name" value="PRK09347.1-2"/>
    <property type="match status" value="1"/>
</dbReference>
<dbReference type="NCBIfam" id="NF006826">
    <property type="entry name" value="PRK09347.1-3"/>
    <property type="match status" value="1"/>
</dbReference>
<dbReference type="PANTHER" id="PTHR11109:SF7">
    <property type="entry name" value="GTP CYCLOHYDROLASE 1"/>
    <property type="match status" value="1"/>
</dbReference>
<dbReference type="PANTHER" id="PTHR11109">
    <property type="entry name" value="GTP CYCLOHYDROLASE I"/>
    <property type="match status" value="1"/>
</dbReference>
<dbReference type="Pfam" id="PF01227">
    <property type="entry name" value="GTP_cyclohydroI"/>
    <property type="match status" value="1"/>
</dbReference>
<dbReference type="SUPFAM" id="SSF55620">
    <property type="entry name" value="Tetrahydrobiopterin biosynthesis enzymes-like"/>
    <property type="match status" value="1"/>
</dbReference>
<dbReference type="PROSITE" id="PS00859">
    <property type="entry name" value="GTP_CYCLOHYDROL_1_1"/>
    <property type="match status" value="1"/>
</dbReference>
<dbReference type="PROSITE" id="PS00860">
    <property type="entry name" value="GTP_CYCLOHYDROL_1_2"/>
    <property type="match status" value="1"/>
</dbReference>
<feature type="chain" id="PRO_0000119433" description="GTP cyclohydrolase 1 2">
    <location>
        <begin position="1"/>
        <end position="181"/>
    </location>
</feature>
<name>GCH12_PSESM</name>
<comment type="catalytic activity">
    <reaction evidence="1">
        <text>GTP + H2O = 7,8-dihydroneopterin 3'-triphosphate + formate + H(+)</text>
        <dbReference type="Rhea" id="RHEA:17473"/>
        <dbReference type="ChEBI" id="CHEBI:15377"/>
        <dbReference type="ChEBI" id="CHEBI:15378"/>
        <dbReference type="ChEBI" id="CHEBI:15740"/>
        <dbReference type="ChEBI" id="CHEBI:37565"/>
        <dbReference type="ChEBI" id="CHEBI:58462"/>
        <dbReference type="EC" id="3.5.4.16"/>
    </reaction>
</comment>
<comment type="pathway">
    <text evidence="1">Cofactor biosynthesis; 7,8-dihydroneopterin triphosphate biosynthesis; 7,8-dihydroneopterin triphosphate from GTP: step 1/1.</text>
</comment>
<comment type="subunit">
    <text evidence="1">Homomer.</text>
</comment>
<comment type="similarity">
    <text evidence="1">Belongs to the GTP cyclohydrolase I family.</text>
</comment>
<accession>Q884Q3</accession>
<keyword id="KW-0342">GTP-binding</keyword>
<keyword id="KW-0378">Hydrolase</keyword>
<keyword id="KW-0547">Nucleotide-binding</keyword>
<keyword id="KW-0554">One-carbon metabolism</keyword>
<keyword id="KW-1185">Reference proteome</keyword>
<reference key="1">
    <citation type="journal article" date="2003" name="Proc. Natl. Acad. Sci. U.S.A.">
        <title>The complete genome sequence of the Arabidopsis and tomato pathogen Pseudomonas syringae pv. tomato DC3000.</title>
        <authorList>
            <person name="Buell C.R."/>
            <person name="Joardar V."/>
            <person name="Lindeberg M."/>
            <person name="Selengut J."/>
            <person name="Paulsen I.T."/>
            <person name="Gwinn M.L."/>
            <person name="Dodson R.J."/>
            <person name="DeBoy R.T."/>
            <person name="Durkin A.S."/>
            <person name="Kolonay J.F."/>
            <person name="Madupu R."/>
            <person name="Daugherty S.C."/>
            <person name="Brinkac L.M."/>
            <person name="Beanan M.J."/>
            <person name="Haft D.H."/>
            <person name="Nelson W.C."/>
            <person name="Davidsen T.M."/>
            <person name="Zafar N."/>
            <person name="Zhou L."/>
            <person name="Liu J."/>
            <person name="Yuan Q."/>
            <person name="Khouri H.M."/>
            <person name="Fedorova N.B."/>
            <person name="Tran B."/>
            <person name="Russell D."/>
            <person name="Berry K.J."/>
            <person name="Utterback T.R."/>
            <person name="Van Aken S.E."/>
            <person name="Feldblyum T.V."/>
            <person name="D'Ascenzo M."/>
            <person name="Deng W.-L."/>
            <person name="Ramos A.R."/>
            <person name="Alfano J.R."/>
            <person name="Cartinhour S."/>
            <person name="Chatterjee A.K."/>
            <person name="Delaney T.P."/>
            <person name="Lazarowitz S.G."/>
            <person name="Martin G.B."/>
            <person name="Schneider D.J."/>
            <person name="Tang X."/>
            <person name="Bender C.L."/>
            <person name="White O."/>
            <person name="Fraser C.M."/>
            <person name="Collmer A."/>
        </authorList>
    </citation>
    <scope>NUCLEOTIDE SEQUENCE [LARGE SCALE GENOMIC DNA]</scope>
    <source>
        <strain>ATCC BAA-871 / DC3000</strain>
    </source>
</reference>
<evidence type="ECO:0000255" key="1">
    <source>
        <dbReference type="HAMAP-Rule" id="MF_00223"/>
    </source>
</evidence>
<protein>
    <recommendedName>
        <fullName evidence="1">GTP cyclohydrolase 1 2</fullName>
        <ecNumber evidence="1">3.5.4.16</ecNumber>
    </recommendedName>
    <alternativeName>
        <fullName evidence="1">GTP cyclohydrolase I 2</fullName>
        <shortName evidence="1">GTP-CH-I 2</shortName>
    </alternativeName>
</protein>
<gene>
    <name evidence="1" type="primary">folE2</name>
    <name type="ordered locus">PSPTO_2035</name>
</gene>